<evidence type="ECO:0000255" key="1">
    <source>
        <dbReference type="HAMAP-Rule" id="MF_00500"/>
    </source>
</evidence>
<evidence type="ECO:0000256" key="2">
    <source>
        <dbReference type="SAM" id="MobiDB-lite"/>
    </source>
</evidence>
<evidence type="ECO:0000305" key="3"/>
<gene>
    <name evidence="1" type="primary">rpsT</name>
    <name type="ordered locus">SpyM50852</name>
</gene>
<name>RS20_STRPG</name>
<comment type="function">
    <text evidence="1">Binds directly to 16S ribosomal RNA.</text>
</comment>
<comment type="similarity">
    <text evidence="1">Belongs to the bacterial ribosomal protein bS20 family.</text>
</comment>
<reference key="1">
    <citation type="journal article" date="2007" name="J. Bacteriol.">
        <title>Complete genome of acute rheumatic fever-associated serotype M5 Streptococcus pyogenes strain Manfredo.</title>
        <authorList>
            <person name="Holden M.T.G."/>
            <person name="Scott A."/>
            <person name="Cherevach I."/>
            <person name="Chillingworth T."/>
            <person name="Churcher C."/>
            <person name="Cronin A."/>
            <person name="Dowd L."/>
            <person name="Feltwell T."/>
            <person name="Hamlin N."/>
            <person name="Holroyd S."/>
            <person name="Jagels K."/>
            <person name="Moule S."/>
            <person name="Mungall K."/>
            <person name="Quail M.A."/>
            <person name="Price C."/>
            <person name="Rabbinowitsch E."/>
            <person name="Sharp S."/>
            <person name="Skelton J."/>
            <person name="Whitehead S."/>
            <person name="Barrell B.G."/>
            <person name="Kehoe M."/>
            <person name="Parkhill J."/>
        </authorList>
    </citation>
    <scope>NUCLEOTIDE SEQUENCE [LARGE SCALE GENOMIC DNA]</scope>
    <source>
        <strain>Manfredo</strain>
    </source>
</reference>
<protein>
    <recommendedName>
        <fullName evidence="1">Small ribosomal subunit protein bS20</fullName>
    </recommendedName>
    <alternativeName>
        <fullName evidence="3">30S ribosomal protein S20</fullName>
    </alternativeName>
</protein>
<keyword id="KW-0687">Ribonucleoprotein</keyword>
<keyword id="KW-0689">Ribosomal protein</keyword>
<keyword id="KW-0694">RNA-binding</keyword>
<keyword id="KW-0699">rRNA-binding</keyword>
<proteinExistence type="inferred from homology"/>
<organism>
    <name type="scientific">Streptococcus pyogenes serotype M5 (strain Manfredo)</name>
    <dbReference type="NCBI Taxonomy" id="160491"/>
    <lineage>
        <taxon>Bacteria</taxon>
        <taxon>Bacillati</taxon>
        <taxon>Bacillota</taxon>
        <taxon>Bacilli</taxon>
        <taxon>Lactobacillales</taxon>
        <taxon>Streptococcaceae</taxon>
        <taxon>Streptococcus</taxon>
    </lineage>
</organism>
<feature type="chain" id="PRO_1000014663" description="Small ribosomal subunit protein bS20">
    <location>
        <begin position="1"/>
        <end position="77"/>
    </location>
</feature>
<feature type="region of interest" description="Disordered" evidence="2">
    <location>
        <begin position="47"/>
        <end position="77"/>
    </location>
</feature>
<sequence length="77" mass="8313">MANIKSAIKRAELNVKANEKNSAQKSAMRTAIKAFEANPSEELFRAASSSIDKAESKGLIHKNKASRDKARLAAKLG</sequence>
<accession>A2REA5</accession>
<dbReference type="EMBL" id="AM295007">
    <property type="protein sequence ID" value="CAM30180.1"/>
    <property type="molecule type" value="Genomic_DNA"/>
</dbReference>
<dbReference type="SMR" id="A2REA5"/>
<dbReference type="KEGG" id="spf:SpyM50852"/>
<dbReference type="HOGENOM" id="CLU_160655_1_1_9"/>
<dbReference type="GO" id="GO:0005829">
    <property type="term" value="C:cytosol"/>
    <property type="evidence" value="ECO:0007669"/>
    <property type="project" value="TreeGrafter"/>
</dbReference>
<dbReference type="GO" id="GO:0015935">
    <property type="term" value="C:small ribosomal subunit"/>
    <property type="evidence" value="ECO:0007669"/>
    <property type="project" value="TreeGrafter"/>
</dbReference>
<dbReference type="GO" id="GO:0070181">
    <property type="term" value="F:small ribosomal subunit rRNA binding"/>
    <property type="evidence" value="ECO:0007669"/>
    <property type="project" value="TreeGrafter"/>
</dbReference>
<dbReference type="GO" id="GO:0003735">
    <property type="term" value="F:structural constituent of ribosome"/>
    <property type="evidence" value="ECO:0007669"/>
    <property type="project" value="InterPro"/>
</dbReference>
<dbReference type="GO" id="GO:0006412">
    <property type="term" value="P:translation"/>
    <property type="evidence" value="ECO:0007669"/>
    <property type="project" value="UniProtKB-UniRule"/>
</dbReference>
<dbReference type="FunFam" id="1.20.58.110:FF:000001">
    <property type="entry name" value="30S ribosomal protein S20"/>
    <property type="match status" value="1"/>
</dbReference>
<dbReference type="Gene3D" id="1.20.58.110">
    <property type="entry name" value="Ribosomal protein S20"/>
    <property type="match status" value="1"/>
</dbReference>
<dbReference type="HAMAP" id="MF_00500">
    <property type="entry name" value="Ribosomal_bS20"/>
    <property type="match status" value="1"/>
</dbReference>
<dbReference type="InterPro" id="IPR002583">
    <property type="entry name" value="Ribosomal_bS20"/>
</dbReference>
<dbReference type="InterPro" id="IPR036510">
    <property type="entry name" value="Ribosomal_bS20_sf"/>
</dbReference>
<dbReference type="NCBIfam" id="TIGR00029">
    <property type="entry name" value="S20"/>
    <property type="match status" value="1"/>
</dbReference>
<dbReference type="PANTHER" id="PTHR33398">
    <property type="entry name" value="30S RIBOSOMAL PROTEIN S20"/>
    <property type="match status" value="1"/>
</dbReference>
<dbReference type="PANTHER" id="PTHR33398:SF1">
    <property type="entry name" value="SMALL RIBOSOMAL SUBUNIT PROTEIN BS20C"/>
    <property type="match status" value="1"/>
</dbReference>
<dbReference type="Pfam" id="PF01649">
    <property type="entry name" value="Ribosomal_S20p"/>
    <property type="match status" value="1"/>
</dbReference>
<dbReference type="SUPFAM" id="SSF46992">
    <property type="entry name" value="Ribosomal protein S20"/>
    <property type="match status" value="1"/>
</dbReference>